<reference key="1">
    <citation type="journal article" date="2015" name="Genome Announc.">
        <title>Genome sequence of Aspergillus flavus NRRL 3357, a strain that causes aflatoxin contamination of food and feed.</title>
        <authorList>
            <person name="Nierman W.C."/>
            <person name="Yu J."/>
            <person name="Fedorova-Abrams N.D."/>
            <person name="Losada L."/>
            <person name="Cleveland T.E."/>
            <person name="Bhatnagar D."/>
            <person name="Bennett J.W."/>
            <person name="Dean R."/>
            <person name="Payne G.A."/>
        </authorList>
    </citation>
    <scope>NUCLEOTIDE SEQUENCE [LARGE SCALE GENOMIC DNA]</scope>
    <source>
        <strain>ATCC 200026 / FGSC A1120 / IAM 13836 / NRRL 3357 / JCM 12722 / SRRC 167</strain>
    </source>
</reference>
<reference key="2">
    <citation type="journal article" date="2014" name="Fungal Genet. Biol.">
        <title>Functional characterization of a veA-dependent polyketide synthase gene in Aspergillus flavus necessary for the synthesis of asparasone, a sclerotium-specific pigment.</title>
        <authorList>
            <person name="Cary J.W."/>
            <person name="Harris-Coward P.Y."/>
            <person name="Ehrlich K.C."/>
            <person name="Di Mavungu J.D."/>
            <person name="Malysheva S.V."/>
            <person name="De Saeger S."/>
            <person name="Dowd P.F."/>
            <person name="Shantappa S."/>
            <person name="Martens S.L."/>
            <person name="Calvo A.M."/>
        </authorList>
    </citation>
    <scope>INDUCTION</scope>
    <scope>DISRUPTION PHENOTYPE</scope>
    <scope>FUNCTION</scope>
</reference>
<sequence>MTSQWKCPAKDQSLRNIQRNRRRLGDSGLPATVVRCSKSGATRRNPAVNDASQCSSIVSTVRIGGKDGRHQPKLQSRVLIFELEDKSLSTE</sequence>
<keyword id="KW-0539">Nucleus</keyword>
<keyword id="KW-0804">Transcription</keyword>
<keyword id="KW-0805">Transcription regulation</keyword>
<proteinExistence type="evidence at transcript level"/>
<organism>
    <name type="scientific">Aspergillus flavus (strain ATCC 200026 / FGSC A1120 / IAM 13836 / NRRL 3357 / JCM 12722 / SRRC 167)</name>
    <dbReference type="NCBI Taxonomy" id="332952"/>
    <lineage>
        <taxon>Eukaryota</taxon>
        <taxon>Fungi</taxon>
        <taxon>Dikarya</taxon>
        <taxon>Ascomycota</taxon>
        <taxon>Pezizomycotina</taxon>
        <taxon>Eurotiomycetes</taxon>
        <taxon>Eurotiomycetidae</taxon>
        <taxon>Eurotiales</taxon>
        <taxon>Aspergillaceae</taxon>
        <taxon>Aspergillus</taxon>
        <taxon>Aspergillus subgen. Circumdati</taxon>
    </lineage>
</organism>
<accession>B8MYS5</accession>
<gene>
    <name evidence="2" type="primary">znf27</name>
    <name type="ORF">AFLA_082140</name>
</gene>
<feature type="chain" id="PRO_0000436133" description="Transcription factor znf27">
    <location>
        <begin position="1"/>
        <end position="91"/>
    </location>
</feature>
<name>ZNF27_ASPFN</name>
<dbReference type="EMBL" id="EQ963472">
    <property type="protein sequence ID" value="EED57517.1"/>
    <property type="molecule type" value="Genomic_DNA"/>
</dbReference>
<dbReference type="RefSeq" id="XP_002373129.1">
    <property type="nucleotide sequence ID" value="XM_002373088.1"/>
</dbReference>
<dbReference type="SMR" id="B8MYS5"/>
<dbReference type="STRING" id="332952.B8MYS5"/>
<dbReference type="EnsemblFungi" id="EED57517">
    <property type="protein sequence ID" value="EED57517"/>
    <property type="gene ID" value="AFLA_082140"/>
</dbReference>
<dbReference type="HOGENOM" id="CLU_2426603_0_0_1"/>
<dbReference type="GO" id="GO:0005634">
    <property type="term" value="C:nucleus"/>
    <property type="evidence" value="ECO:0007669"/>
    <property type="project" value="UniProtKB-SubCell"/>
</dbReference>
<protein>
    <recommendedName>
        <fullName evidence="3">Transcription factor znf27</fullName>
    </recommendedName>
    <alternativeName>
        <fullName evidence="3">Asparasone A synthesis protein znf27</fullName>
    </alternativeName>
</protein>
<comment type="function">
    <text evidence="1">Transcription factor; part of the gene cluster 27 that mediates the biosynthesis of asparasone A, a sclerotium-specific anthraquinone pigment important for sclerotial survival (PubMed:24412484). Controls the expression of the non-reducing polyketide synthase (NRPKS) pks27 (PubMed:24412484).</text>
</comment>
<comment type="subcellular location">
    <subcellularLocation>
        <location evidence="3">Nucleus</location>
    </subcellularLocation>
</comment>
<comment type="induction">
    <text evidence="1">Expression is induced by the developmental and secondary metabolism regulator veA (PubMed:24412484).</text>
</comment>
<comment type="disruption phenotype">
    <text evidence="1">Impairs the production of asparasone A (PubMed:24412484).</text>
</comment>
<evidence type="ECO:0000269" key="1">
    <source>
    </source>
</evidence>
<evidence type="ECO:0000303" key="2">
    <source>
    </source>
</evidence>
<evidence type="ECO:0000305" key="3"/>